<keyword id="KW-0002">3D-structure</keyword>
<keyword id="KW-0028">Amino-acid biosynthesis</keyword>
<keyword id="KW-0963">Cytoplasm</keyword>
<keyword id="KW-0486">Methionine biosynthesis</keyword>
<keyword id="KW-0521">NADP</keyword>
<keyword id="KW-0539">Nucleus</keyword>
<keyword id="KW-0560">Oxidoreductase</keyword>
<keyword id="KW-1185">Reference proteome</keyword>
<keyword id="KW-0791">Threonine biosynthesis</keyword>
<comment type="function">
    <text evidence="7 8">Catalyzes the NADPH-dependent formation of L-aspartate 4-semialdehyde (L-ASA) by the reductive dephosphorylation of 4-phospho-L-aspartate (PubMed:28045392, PubMed:29608391). Mediates the second step in the biosynthesis of amino acids that derive from aspartate (the aspartate family of amino acids), including methioinine and threonine, the latter of which is a precursor to isoleucine (PubMed:28045392).</text>
</comment>
<comment type="catalytic activity">
    <reaction evidence="7 8">
        <text>L-aspartate 4-semialdehyde + phosphate + NADP(+) = 4-phospho-L-aspartate + NADPH + H(+)</text>
        <dbReference type="Rhea" id="RHEA:24284"/>
        <dbReference type="ChEBI" id="CHEBI:15378"/>
        <dbReference type="ChEBI" id="CHEBI:43474"/>
        <dbReference type="ChEBI" id="CHEBI:57535"/>
        <dbReference type="ChEBI" id="CHEBI:57783"/>
        <dbReference type="ChEBI" id="CHEBI:58349"/>
        <dbReference type="ChEBI" id="CHEBI:537519"/>
        <dbReference type="EC" id="1.2.1.11"/>
    </reaction>
    <physiologicalReaction direction="right-to-left" evidence="7 8">
        <dbReference type="Rhea" id="RHEA:24286"/>
    </physiologicalReaction>
</comment>
<comment type="activity regulation">
    <text evidence="8">Inhibited by 4-amino-3-hydroxynaphthalene-1-sulfonic acid and the competitive inhibitor 1,4-benzoquinone and derivates such as 2-chloro-3-methoxy-1,4-naphthoquinone, 2,3-dichloro-1,4-naphthoquinone, 2-chloro-1,4-naphthoquinone, 2-bromo-1,4-naphthoquinone and 2,3-dichloro-5,8-dihydroxy-1,4-naphthoquinone.</text>
</comment>
<comment type="biophysicochemical properties">
    <kinetics>
        <KM evidence="7">0.29 mM for L-aspartate 4-semialdehyde</KM>
        <text evidence="7">kcat is 6.1 sec(-1) with L-aspartate 4-semialdehyde as substrate.</text>
    </kinetics>
</comment>
<comment type="pathway">
    <text evidence="7">Amino-acid biosynthesis; L-methionine biosynthesis via de novo pathway; L-homoserine from L-aspartate: step 2/3.</text>
</comment>
<comment type="pathway">
    <text evidence="7">Amino-acid biosynthesis; L-threonine biosynthesis; L-threonine from L-aspartate: step 2/5.</text>
</comment>
<comment type="subunit">
    <text evidence="6 7">Homotetramer; dimer of dimers.</text>
</comment>
<comment type="subcellular location">
    <subcellularLocation>
        <location evidence="3">Cytoplasm</location>
        <location evidence="3">Cytosol</location>
    </subcellularLocation>
    <subcellularLocation>
        <location evidence="3">Nucleus</location>
    </subcellularLocation>
</comment>
<comment type="similarity">
    <text evidence="10">Belongs to the aspartate-semialdehyde dehydrogenase family.</text>
</comment>
<dbReference type="EC" id="1.2.1.11" evidence="7 8"/>
<dbReference type="EMBL" id="AAHF01000002">
    <property type="protein sequence ID" value="EAL92885.1"/>
    <property type="molecule type" value="Genomic_DNA"/>
</dbReference>
<dbReference type="RefSeq" id="XP_754923.1">
    <property type="nucleotide sequence ID" value="XM_749830.1"/>
</dbReference>
<dbReference type="PDB" id="5JW6">
    <property type="method" value="X-ray"/>
    <property type="resolution" value="2.39 A"/>
    <property type="chains" value="A/B=1-363"/>
</dbReference>
<dbReference type="PDBsum" id="5JW6"/>
<dbReference type="SMR" id="Q4WWR8"/>
<dbReference type="FunCoup" id="Q4WWR8">
    <property type="interactions" value="341"/>
</dbReference>
<dbReference type="STRING" id="330879.Q4WWR8"/>
<dbReference type="EnsemblFungi" id="EAL92885">
    <property type="protein sequence ID" value="EAL92885"/>
    <property type="gene ID" value="AFUA_3G06830"/>
</dbReference>
<dbReference type="GeneID" id="3511869"/>
<dbReference type="KEGG" id="afm:AFUA_3G06830"/>
<dbReference type="VEuPathDB" id="FungiDB:Afu3g06830"/>
<dbReference type="eggNOG" id="KOG4777">
    <property type="taxonomic scope" value="Eukaryota"/>
</dbReference>
<dbReference type="HOGENOM" id="CLU_049966_1_0_1"/>
<dbReference type="InParanoid" id="Q4WWR8"/>
<dbReference type="OMA" id="CEEEMKM"/>
<dbReference type="OrthoDB" id="1894490at2759"/>
<dbReference type="BRENDA" id="1.2.1.11">
    <property type="organism ID" value="508"/>
</dbReference>
<dbReference type="UniPathway" id="UPA00050">
    <property type="reaction ID" value="UER00463"/>
</dbReference>
<dbReference type="UniPathway" id="UPA00051">
    <property type="reaction ID" value="UER00464"/>
</dbReference>
<dbReference type="Proteomes" id="UP000002530">
    <property type="component" value="Chromosome 3"/>
</dbReference>
<dbReference type="GO" id="GO:0005829">
    <property type="term" value="C:cytosol"/>
    <property type="evidence" value="ECO:0007669"/>
    <property type="project" value="UniProtKB-SubCell"/>
</dbReference>
<dbReference type="GO" id="GO:0005634">
    <property type="term" value="C:nucleus"/>
    <property type="evidence" value="ECO:0007669"/>
    <property type="project" value="UniProtKB-SubCell"/>
</dbReference>
<dbReference type="GO" id="GO:0004073">
    <property type="term" value="F:aspartate-semialdehyde dehydrogenase activity"/>
    <property type="evidence" value="ECO:0000314"/>
    <property type="project" value="UniProtKB"/>
</dbReference>
<dbReference type="GO" id="GO:0051287">
    <property type="term" value="F:NAD binding"/>
    <property type="evidence" value="ECO:0007669"/>
    <property type="project" value="InterPro"/>
</dbReference>
<dbReference type="GO" id="GO:0050661">
    <property type="term" value="F:NADP binding"/>
    <property type="evidence" value="ECO:0007669"/>
    <property type="project" value="InterPro"/>
</dbReference>
<dbReference type="GO" id="GO:0046983">
    <property type="term" value="F:protein dimerization activity"/>
    <property type="evidence" value="ECO:0007669"/>
    <property type="project" value="InterPro"/>
</dbReference>
<dbReference type="GO" id="GO:0071266">
    <property type="term" value="P:'de novo' L-methionine biosynthetic process"/>
    <property type="evidence" value="ECO:0000314"/>
    <property type="project" value="UniProtKB"/>
</dbReference>
<dbReference type="GO" id="GO:0009090">
    <property type="term" value="P:homoserine biosynthetic process"/>
    <property type="evidence" value="ECO:0007669"/>
    <property type="project" value="EnsemblFungi"/>
</dbReference>
<dbReference type="GO" id="GO:0009086">
    <property type="term" value="P:methionine biosynthetic process"/>
    <property type="evidence" value="ECO:0000318"/>
    <property type="project" value="GO_Central"/>
</dbReference>
<dbReference type="GO" id="GO:0009088">
    <property type="term" value="P:threonine biosynthetic process"/>
    <property type="evidence" value="ECO:0000314"/>
    <property type="project" value="UniProtKB"/>
</dbReference>
<dbReference type="CDD" id="cd18130">
    <property type="entry name" value="ASADH_C_arch_fung_like"/>
    <property type="match status" value="1"/>
</dbReference>
<dbReference type="CDD" id="cd02315">
    <property type="entry name" value="ScASADH_like_N"/>
    <property type="match status" value="1"/>
</dbReference>
<dbReference type="FunFam" id="3.40.50.720:FF:000200">
    <property type="entry name" value="Aspartate-semialdehyde dehydrogenase"/>
    <property type="match status" value="1"/>
</dbReference>
<dbReference type="FunFam" id="3.30.360.10:FF:000016">
    <property type="entry name" value="Probable aspartate-semialdehyde dehydrogenase"/>
    <property type="match status" value="1"/>
</dbReference>
<dbReference type="Gene3D" id="3.30.360.10">
    <property type="entry name" value="Dihydrodipicolinate Reductase, domain 2"/>
    <property type="match status" value="1"/>
</dbReference>
<dbReference type="Gene3D" id="3.40.50.720">
    <property type="entry name" value="NAD(P)-binding Rossmann-like Domain"/>
    <property type="match status" value="1"/>
</dbReference>
<dbReference type="InterPro" id="IPR051823">
    <property type="entry name" value="ASADH-related"/>
</dbReference>
<dbReference type="InterPro" id="IPR005676">
    <property type="entry name" value="Asp_semi-ald_DH_pep-lack"/>
</dbReference>
<dbReference type="InterPro" id="IPR036291">
    <property type="entry name" value="NAD(P)-bd_dom_sf"/>
</dbReference>
<dbReference type="InterPro" id="IPR000534">
    <property type="entry name" value="Semialdehyde_DH_NAD-bd"/>
</dbReference>
<dbReference type="InterPro" id="IPR012280">
    <property type="entry name" value="Semialdhyde_DH_dimer_dom"/>
</dbReference>
<dbReference type="NCBIfam" id="TIGR00978">
    <property type="entry name" value="asd_EA"/>
    <property type="match status" value="1"/>
</dbReference>
<dbReference type="NCBIfam" id="NF006416">
    <property type="entry name" value="PRK08664.1"/>
    <property type="match status" value="1"/>
</dbReference>
<dbReference type="PANTHER" id="PTHR46718">
    <property type="entry name" value="ASPARTATE-SEMIALDEHYDE DEHYDROGENASE"/>
    <property type="match status" value="1"/>
</dbReference>
<dbReference type="PANTHER" id="PTHR46718:SF1">
    <property type="entry name" value="ASPARTATE-SEMIALDEHYDE DEHYDROGENASE"/>
    <property type="match status" value="1"/>
</dbReference>
<dbReference type="Pfam" id="PF01118">
    <property type="entry name" value="Semialdhyde_dh"/>
    <property type="match status" value="1"/>
</dbReference>
<dbReference type="Pfam" id="PF02774">
    <property type="entry name" value="Semialdhyde_dhC"/>
    <property type="match status" value="1"/>
</dbReference>
<dbReference type="PIRSF" id="PIRSF000148">
    <property type="entry name" value="ASA_dh"/>
    <property type="match status" value="1"/>
</dbReference>
<dbReference type="SMART" id="SM00859">
    <property type="entry name" value="Semialdhyde_dh"/>
    <property type="match status" value="1"/>
</dbReference>
<dbReference type="SUPFAM" id="SSF55347">
    <property type="entry name" value="Glyceraldehyde-3-phosphate dehydrogenase-like, C-terminal domain"/>
    <property type="match status" value="1"/>
</dbReference>
<dbReference type="SUPFAM" id="SSF51735">
    <property type="entry name" value="NAD(P)-binding Rossmann-fold domains"/>
    <property type="match status" value="1"/>
</dbReference>
<sequence>MASYPKKKCGVLGATGSVGQRFILLLADHPFLELHAIGASNRSAGKKYKDAVRWKQTTAMSERLSNLVLRDCRADQFSDCDLVFSGLNSDVAGEIEMEFIKAEIPVFSNAKNYRKHPLVPLVVPTVNPQHLDLIPHQRKEFGLKKGFLVCNSNCAVIGVVIPFAALQAKFGPVEEVEVFTEQAVSGAGYPGVPSMDIMDNVIPYISGEEDKLENEAQKILGSLNADATAFDEQKGLTVGATCTRVGVTDGHMAFVSLRFKNRPGPSAEEVKQAMREYQSEAQKLGCPSAPREAIKVFDEPDRPQPRLDRDISKGYTVSVGRVREAAPGSYFDLRFAALSHNTVIGAAGSSILNAEVAVIKGYI</sequence>
<organism evidence="12">
    <name type="scientific">Aspergillus fumigatus (strain ATCC MYA-4609 / CBS 101355 / FGSC A1100 / Af293)</name>
    <name type="common">Neosartorya fumigata</name>
    <dbReference type="NCBI Taxonomy" id="330879"/>
    <lineage>
        <taxon>Eukaryota</taxon>
        <taxon>Fungi</taxon>
        <taxon>Dikarya</taxon>
        <taxon>Ascomycota</taxon>
        <taxon>Pezizomycotina</taxon>
        <taxon>Eurotiomycetes</taxon>
        <taxon>Eurotiomycetidae</taxon>
        <taxon>Eurotiales</taxon>
        <taxon>Aspergillaceae</taxon>
        <taxon>Aspergillus</taxon>
        <taxon>Aspergillus subgen. Fumigati</taxon>
    </lineage>
</organism>
<feature type="chain" id="PRO_0000461594" description="Aspartate-semialdehyde dehydrogenase">
    <location>
        <begin position="1"/>
        <end position="363"/>
    </location>
</feature>
<feature type="active site" description="Acyl-thioester intermediate" evidence="5">
    <location>
        <position position="154"/>
    </location>
</feature>
<feature type="active site" description="Proton acceptor" evidence="5">
    <location>
        <position position="251"/>
    </location>
</feature>
<feature type="binding site" evidence="4">
    <location>
        <position position="15"/>
    </location>
    <ligand>
        <name>NADP(+)</name>
        <dbReference type="ChEBI" id="CHEBI:58349"/>
    </ligand>
</feature>
<feature type="binding site" evidence="4">
    <location>
        <position position="16"/>
    </location>
    <ligand>
        <name>NADP(+)</name>
        <dbReference type="ChEBI" id="CHEBI:58349"/>
    </ligand>
</feature>
<feature type="binding site" evidence="4">
    <location>
        <position position="17"/>
    </location>
    <ligand>
        <name>NADP(+)</name>
        <dbReference type="ChEBI" id="CHEBI:58349"/>
    </ligand>
</feature>
<feature type="binding site" evidence="2">
    <location>
        <position position="18"/>
    </location>
    <ligand>
        <name>NADP(+)</name>
        <dbReference type="ChEBI" id="CHEBI:58349"/>
    </ligand>
</feature>
<feature type="binding site" evidence="4">
    <location>
        <position position="40"/>
    </location>
    <ligand>
        <name>NADP(+)</name>
        <dbReference type="ChEBI" id="CHEBI:58349"/>
    </ligand>
</feature>
<feature type="binding site" evidence="4">
    <location>
        <position position="43"/>
    </location>
    <ligand>
        <name>NADP(+)</name>
        <dbReference type="ChEBI" id="CHEBI:58349"/>
    </ligand>
</feature>
<feature type="binding site" evidence="1">
    <location>
        <position position="87"/>
    </location>
    <ligand>
        <name>NADP(+)</name>
        <dbReference type="ChEBI" id="CHEBI:58349"/>
    </ligand>
</feature>
<feature type="binding site" evidence="1">
    <location>
        <position position="186"/>
    </location>
    <ligand>
        <name>NADP(+)</name>
        <dbReference type="ChEBI" id="CHEBI:58349"/>
    </ligand>
</feature>
<feature type="binding site" evidence="2">
    <location>
        <position position="341"/>
    </location>
    <ligand>
        <name>NADP(+)</name>
        <dbReference type="ChEBI" id="CHEBI:58349"/>
    </ligand>
</feature>
<feature type="strand" evidence="14">
    <location>
        <begin position="7"/>
        <end position="13"/>
    </location>
</feature>
<feature type="helix" evidence="14">
    <location>
        <begin position="17"/>
        <end position="25"/>
    </location>
</feature>
<feature type="turn" evidence="14">
    <location>
        <begin position="26"/>
        <end position="28"/>
    </location>
</feature>
<feature type="strand" evidence="14">
    <location>
        <begin position="30"/>
        <end position="39"/>
    </location>
</feature>
<feature type="helix" evidence="14">
    <location>
        <begin position="41"/>
        <end position="43"/>
    </location>
</feature>
<feature type="helix" evidence="14">
    <location>
        <begin position="48"/>
        <end position="50"/>
    </location>
</feature>
<feature type="helix" evidence="14">
    <location>
        <begin position="62"/>
        <end position="66"/>
    </location>
</feature>
<feature type="strand" evidence="14">
    <location>
        <begin position="70"/>
        <end position="73"/>
    </location>
</feature>
<feature type="helix" evidence="14">
    <location>
        <begin position="74"/>
        <end position="76"/>
    </location>
</feature>
<feature type="strand" evidence="14">
    <location>
        <begin position="81"/>
        <end position="85"/>
    </location>
</feature>
<feature type="helix" evidence="14">
    <location>
        <begin position="92"/>
        <end position="101"/>
    </location>
</feature>
<feature type="strand" evidence="14">
    <location>
        <begin position="106"/>
        <end position="108"/>
    </location>
</feature>
<feature type="turn" evidence="14">
    <location>
        <begin position="112"/>
        <end position="115"/>
    </location>
</feature>
<feature type="turn" evidence="14">
    <location>
        <begin position="124"/>
        <end position="126"/>
    </location>
</feature>
<feature type="helix" evidence="14">
    <location>
        <begin position="128"/>
        <end position="133"/>
    </location>
</feature>
<feature type="helix" evidence="14">
    <location>
        <begin position="134"/>
        <end position="141"/>
    </location>
</feature>
<feature type="strand" evidence="14">
    <location>
        <begin position="148"/>
        <end position="150"/>
    </location>
</feature>
<feature type="helix" evidence="14">
    <location>
        <begin position="157"/>
        <end position="170"/>
    </location>
</feature>
<feature type="strand" evidence="14">
    <location>
        <begin position="173"/>
        <end position="182"/>
    </location>
</feature>
<feature type="helix" evidence="14">
    <location>
        <begin position="194"/>
        <end position="197"/>
    </location>
</feature>
<feature type="helix" evidence="14">
    <location>
        <begin position="208"/>
        <end position="220"/>
    </location>
</feature>
<feature type="strand" evidence="14">
    <location>
        <begin position="221"/>
        <end position="223"/>
    </location>
</feature>
<feature type="strand" evidence="14">
    <location>
        <begin position="227"/>
        <end position="231"/>
    </location>
</feature>
<feature type="strand" evidence="14">
    <location>
        <begin position="237"/>
        <end position="244"/>
    </location>
</feature>
<feature type="strand" evidence="14">
    <location>
        <begin position="251"/>
        <end position="263"/>
    </location>
</feature>
<feature type="helix" evidence="14">
    <location>
        <begin position="267"/>
        <end position="276"/>
    </location>
</feature>
<feature type="helix" evidence="14">
    <location>
        <begin position="280"/>
        <end position="283"/>
    </location>
</feature>
<feature type="strand" evidence="14">
    <location>
        <begin position="293"/>
        <end position="296"/>
    </location>
</feature>
<feature type="helix" evidence="14">
    <location>
        <begin position="305"/>
        <end position="308"/>
    </location>
</feature>
<feature type="helix" evidence="14">
    <location>
        <begin position="311"/>
        <end position="314"/>
    </location>
</feature>
<feature type="strand" evidence="14">
    <location>
        <begin position="316"/>
        <end position="324"/>
    </location>
</feature>
<feature type="strand" evidence="14">
    <location>
        <begin position="332"/>
        <end position="339"/>
    </location>
</feature>
<feature type="turn" evidence="14">
    <location>
        <begin position="341"/>
        <end position="345"/>
    </location>
</feature>
<feature type="helix" evidence="14">
    <location>
        <begin position="347"/>
        <end position="358"/>
    </location>
</feature>
<feature type="turn" evidence="14">
    <location>
        <begin position="359"/>
        <end position="361"/>
    </location>
</feature>
<protein>
    <recommendedName>
        <fullName evidence="10">Aspartate-semialdehyde dehydrogenase</fullName>
        <ecNumber evidence="7 8">1.2.1.11</ecNumber>
    </recommendedName>
    <alternativeName>
        <fullName evidence="9">AfASADH</fullName>
    </alternativeName>
</protein>
<gene>
    <name evidence="10" type="primary">hom2</name>
    <name evidence="11" type="ORF">AFUA_3G06830</name>
</gene>
<proteinExistence type="evidence at protein level"/>
<accession>Q4WWR8</accession>
<name>DHAS_ASPFU</name>
<reference evidence="12" key="1">
    <citation type="journal article" date="2005" name="Nature">
        <title>Genomic sequence of the pathogenic and allergenic filamentous fungus Aspergillus fumigatus.</title>
        <authorList>
            <person name="Nierman W.C."/>
            <person name="Pain A."/>
            <person name="Anderson M.J."/>
            <person name="Wortman J.R."/>
            <person name="Kim H.S."/>
            <person name="Arroyo J."/>
            <person name="Berriman M."/>
            <person name="Abe K."/>
            <person name="Archer D.B."/>
            <person name="Bermejo C."/>
            <person name="Bennett J.W."/>
            <person name="Bowyer P."/>
            <person name="Chen D."/>
            <person name="Collins M."/>
            <person name="Coulsen R."/>
            <person name="Davies R."/>
            <person name="Dyer P.S."/>
            <person name="Farman M.L."/>
            <person name="Fedorova N."/>
            <person name="Fedorova N.D."/>
            <person name="Feldblyum T.V."/>
            <person name="Fischer R."/>
            <person name="Fosker N."/>
            <person name="Fraser A."/>
            <person name="Garcia J.L."/>
            <person name="Garcia M.J."/>
            <person name="Goble A."/>
            <person name="Goldman G.H."/>
            <person name="Gomi K."/>
            <person name="Griffith-Jones S."/>
            <person name="Gwilliam R."/>
            <person name="Haas B.J."/>
            <person name="Haas H."/>
            <person name="Harris D.E."/>
            <person name="Horiuchi H."/>
            <person name="Huang J."/>
            <person name="Humphray S."/>
            <person name="Jimenez J."/>
            <person name="Keller N."/>
            <person name="Khouri H."/>
            <person name="Kitamoto K."/>
            <person name="Kobayashi T."/>
            <person name="Konzack S."/>
            <person name="Kulkarni R."/>
            <person name="Kumagai T."/>
            <person name="Lafton A."/>
            <person name="Latge J.-P."/>
            <person name="Li W."/>
            <person name="Lord A."/>
            <person name="Lu C."/>
            <person name="Majoros W.H."/>
            <person name="May G.S."/>
            <person name="Miller B.L."/>
            <person name="Mohamoud Y."/>
            <person name="Molina M."/>
            <person name="Monod M."/>
            <person name="Mouyna I."/>
            <person name="Mulligan S."/>
            <person name="Murphy L.D."/>
            <person name="O'Neil S."/>
            <person name="Paulsen I."/>
            <person name="Penalva M.A."/>
            <person name="Pertea M."/>
            <person name="Price C."/>
            <person name="Pritchard B.L."/>
            <person name="Quail M.A."/>
            <person name="Rabbinowitsch E."/>
            <person name="Rawlins N."/>
            <person name="Rajandream M.A."/>
            <person name="Reichard U."/>
            <person name="Renauld H."/>
            <person name="Robson G.D."/>
            <person name="Rodriguez de Cordoba S."/>
            <person name="Rodriguez-Pena J.M."/>
            <person name="Ronning C.M."/>
            <person name="Rutter S."/>
            <person name="Salzberg S.L."/>
            <person name="Sanchez M."/>
            <person name="Sanchez-Ferrero J.C."/>
            <person name="Saunders D."/>
            <person name="Seeger K."/>
            <person name="Squares R."/>
            <person name="Squares S."/>
            <person name="Takeuchi M."/>
            <person name="Tekaia F."/>
            <person name="Turner G."/>
            <person name="Vazquez de Aldana C.R."/>
            <person name="Weidman J."/>
            <person name="White O."/>
            <person name="Woodward J.R."/>
            <person name="Yu J.-H."/>
            <person name="Fraser C.M."/>
            <person name="Galagan J.E."/>
            <person name="Asai K."/>
            <person name="Machida M."/>
            <person name="Hall N."/>
            <person name="Barrell B.G."/>
            <person name="Denning D.W."/>
        </authorList>
    </citation>
    <scope>NUCLEOTIDE SEQUENCE [LARGE SCALE GENOMIC DNA]</scope>
    <source>
        <strain evidence="12">ATCC MYA-4609 / CBS 101355 / FGSC A1100 / Af293</strain>
    </source>
</reference>
<reference evidence="10" key="2">
    <citation type="journal article" date="2016" name="Sci. Rep.">
        <title>Structural Insights into the Tetrameric State of Aspartate-beta-semialdehyde Dehydrogenases from Fungal Species.</title>
        <authorList>
            <person name="Li Q."/>
            <person name="Mu Z."/>
            <person name="Zhao R."/>
            <person name="Dahal G."/>
            <person name="Viola R.E."/>
            <person name="Liu T."/>
            <person name="Jin Q."/>
            <person name="Cui S."/>
        </authorList>
    </citation>
    <scope>SUBUNIT</scope>
</reference>
<reference evidence="10" key="3">
    <citation type="journal article" date="2018" name="SLAS Discovery">
        <title>A Fragment Library Screening Approach to Identify Selective Inhibitors against an Essential Fungal Enzyme.</title>
        <authorList>
            <person name="Dahal G.P."/>
            <person name="Viola R.E."/>
        </authorList>
    </citation>
    <scope>FUNCTION</scope>
    <scope>CATALYTIC ACTIVITY</scope>
    <scope>ACTIVITY REGULATION</scope>
</reference>
<reference evidence="13" key="4">
    <citation type="journal article" date="2017" name="Acta Crystallogr. F">
        <title>Structure of a fungal form of aspartate-semialdehyde dehydrogenase from Aspergillus fumigatus.</title>
        <authorList>
            <person name="Dahal G.P."/>
            <person name="Viola R.E."/>
        </authorList>
    </citation>
    <scope>X-RAY CRYSTALLOGRAPHY (2.39 ANGSTROMS)</scope>
    <scope>FUNCTION</scope>
    <scope>CATALYTIC ACTIVITY</scope>
    <scope>BIOPHYSICOCHEMICAL PROPERTIES</scope>
    <scope>PATHWAY</scope>
    <scope>SUBUNIT</scope>
</reference>
<evidence type="ECO:0000250" key="1">
    <source>
        <dbReference type="UniProtKB" id="A0A080WMA9"/>
    </source>
</evidence>
<evidence type="ECO:0000250" key="2">
    <source>
        <dbReference type="UniProtKB" id="A0A179UL48"/>
    </source>
</evidence>
<evidence type="ECO:0000250" key="3">
    <source>
        <dbReference type="UniProtKB" id="P13663"/>
    </source>
</evidence>
<evidence type="ECO:0000250" key="4">
    <source>
        <dbReference type="UniProtKB" id="Q5ALM0"/>
    </source>
</evidence>
<evidence type="ECO:0000255" key="5">
    <source>
        <dbReference type="PIRSR" id="PIRSR000148-1"/>
    </source>
</evidence>
<evidence type="ECO:0000269" key="6">
    <source>
    </source>
</evidence>
<evidence type="ECO:0000269" key="7">
    <source>
    </source>
</evidence>
<evidence type="ECO:0000269" key="8">
    <source>
    </source>
</evidence>
<evidence type="ECO:0000303" key="9">
    <source>
    </source>
</evidence>
<evidence type="ECO:0000305" key="10"/>
<evidence type="ECO:0000312" key="11">
    <source>
        <dbReference type="EMBL" id="EAL92885.1"/>
    </source>
</evidence>
<evidence type="ECO:0000312" key="12">
    <source>
        <dbReference type="Proteomes" id="UP000002530"/>
    </source>
</evidence>
<evidence type="ECO:0007744" key="13">
    <source>
        <dbReference type="PDB" id="5JW6"/>
    </source>
</evidence>
<evidence type="ECO:0007829" key="14">
    <source>
        <dbReference type="PDB" id="5JW6"/>
    </source>
</evidence>